<dbReference type="EMBL" id="U76612">
    <property type="protein sequence ID" value="AAB26970.1"/>
    <property type="molecule type" value="Genomic_DNA"/>
</dbReference>
<dbReference type="EMBL" id="AF158101">
    <property type="protein sequence ID" value="AAD42592.1"/>
    <property type="molecule type" value="Genomic_DNA"/>
</dbReference>
<dbReference type="RefSeq" id="NP_049710.1">
    <property type="nucleotide sequence ID" value="NC_000866.4"/>
</dbReference>
<dbReference type="SMR" id="P39241"/>
<dbReference type="GeneID" id="1258744"/>
<dbReference type="KEGG" id="vg:1258744"/>
<dbReference type="OrthoDB" id="19703at10239"/>
<dbReference type="Proteomes" id="UP000009087">
    <property type="component" value="Segment"/>
</dbReference>
<dbReference type="GO" id="GO:0004519">
    <property type="term" value="F:endonuclease activity"/>
    <property type="evidence" value="ECO:0007669"/>
    <property type="project" value="UniProtKB-KW"/>
</dbReference>
<dbReference type="CDD" id="cd00085">
    <property type="entry name" value="HNHc"/>
    <property type="match status" value="1"/>
</dbReference>
<dbReference type="InterPro" id="IPR003615">
    <property type="entry name" value="HNH_nuc"/>
</dbReference>
<dbReference type="SMART" id="SM00507">
    <property type="entry name" value="HNHc"/>
    <property type="match status" value="1"/>
</dbReference>
<proteinExistence type="predicted"/>
<reference key="1">
    <citation type="submission" date="1996-11" db="EMBL/GenBank/DDBJ databases">
        <title>The 10.7 kb 'nonessential' region of bacteriophage T4 between the genes tk and nrdC: twenty new t4 genes, generally conserved among T-even phages.</title>
        <authorList>
            <person name="Mzhavia N."/>
            <person name="Marusich E."/>
            <person name="Djavakhishvili T."/>
            <person name="Neitzel J."/>
            <person name="Peterson S."/>
            <person name="Awaya M."/>
            <person name="Eidermiller J."/>
            <person name="Canada D."/>
            <person name="Tracy J."/>
            <person name="Gailbreath K."/>
            <person name="Paddison P."/>
            <person name="Anderson B."/>
            <person name="Stidham T."/>
            <person name="Blattner F."/>
            <person name="Kutter E.M."/>
        </authorList>
    </citation>
    <scope>NUCLEOTIDE SEQUENCE [GENOMIC DNA]</scope>
</reference>
<reference key="2">
    <citation type="journal article" date="2003" name="Microbiol. Mol. Biol. Rev.">
        <title>Bacteriophage T4 genome.</title>
        <authorList>
            <person name="Miller E.S."/>
            <person name="Kutter E."/>
            <person name="Mosig G."/>
            <person name="Arisaka F."/>
            <person name="Kunisawa T."/>
            <person name="Ruger W."/>
        </authorList>
    </citation>
    <scope>NUCLEOTIDE SEQUENCE [LARGE SCALE GENOMIC DNA]</scope>
</reference>
<keyword id="KW-0255">Endonuclease</keyword>
<keyword id="KW-0378">Hydrolase</keyword>
<keyword id="KW-0540">Nuclease</keyword>
<keyword id="KW-1185">Reference proteome</keyword>
<organism>
    <name type="scientific">Enterobacteria phage T4</name>
    <name type="common">Bacteriophage T4</name>
    <dbReference type="NCBI Taxonomy" id="10665"/>
    <lineage>
        <taxon>Viruses</taxon>
        <taxon>Duplodnaviria</taxon>
        <taxon>Heunggongvirae</taxon>
        <taxon>Uroviricota</taxon>
        <taxon>Caudoviricetes</taxon>
        <taxon>Straboviridae</taxon>
        <taxon>Tevenvirinae</taxon>
        <taxon>Tequatrovirus</taxon>
    </lineage>
</organism>
<organismHost>
    <name type="scientific">Escherichia coli</name>
    <dbReference type="NCBI Taxonomy" id="562"/>
</organismHost>
<evidence type="ECO:0000305" key="1"/>
<name>MOBD_BPT4</name>
<protein>
    <recommendedName>
        <fullName>Probable mobile endonuclease D</fullName>
    </recommendedName>
</protein>
<comment type="similarity">
    <text evidence="1">To phage T4 mobB and mobC.</text>
</comment>
<gene>
    <name type="primary">mobD</name>
    <name type="synonym">tk.-10</name>
</gene>
<sequence>MNYTKVYNNLIKKGKLRKLDKSKLNFYTEKHHIIPSCIGGNDDSDNLVLLTAREHFIAHWLLAKIHYNSPGLIYAWWSFYNFGEDSLGRNLKLTSRGYQLVREKFSKIHSNTMKEMWKSNEYREKRSITLSLPEIRAKISESQLEAQNKPEVKEKISKGVKAAFKRPGVKEKHSAAVKKSLNNFEAKKKQSNSSKIRQRTGKHWQDYDLLYKLWIKLNRPKRGSFGTYISKLGYPKSNYHRLIVQFNEDYERSNNENCS</sequence>
<accession>P39241</accession>
<accession>Q96216</accession>
<feature type="chain" id="PRO_0000164952" description="Probable mobile endonuclease D">
    <location>
        <begin position="1"/>
        <end position="259"/>
    </location>
</feature>